<sequence>MSVKEESFEKALARLERIAVALEAGDVPLEKGVALYKEGMGLVASCRKRLEAARLEISLAGEDGAVVPFDVADDEAARDGGPAGEES</sequence>
<accession>C4XTC8</accession>
<gene>
    <name evidence="1" type="primary">xseB</name>
    <name type="ordered locus">DMR_24340</name>
</gene>
<proteinExistence type="inferred from homology"/>
<name>EX7S_SOLM1</name>
<organism>
    <name type="scientific">Solidesulfovibrio magneticus (strain ATCC 700980 / DSM 13731 / RS-1)</name>
    <name type="common">Desulfovibrio magneticus</name>
    <dbReference type="NCBI Taxonomy" id="573370"/>
    <lineage>
        <taxon>Bacteria</taxon>
        <taxon>Pseudomonadati</taxon>
        <taxon>Thermodesulfobacteriota</taxon>
        <taxon>Desulfovibrionia</taxon>
        <taxon>Desulfovibrionales</taxon>
        <taxon>Desulfovibrionaceae</taxon>
        <taxon>Solidesulfovibrio</taxon>
    </lineage>
</organism>
<comment type="function">
    <text evidence="1">Bidirectionally degrades single-stranded DNA into large acid-insoluble oligonucleotides, which are then degraded further into small acid-soluble oligonucleotides.</text>
</comment>
<comment type="catalytic activity">
    <reaction evidence="1">
        <text>Exonucleolytic cleavage in either 5'- to 3'- or 3'- to 5'-direction to yield nucleoside 5'-phosphates.</text>
        <dbReference type="EC" id="3.1.11.6"/>
    </reaction>
</comment>
<comment type="subunit">
    <text evidence="1">Heterooligomer composed of large and small subunits.</text>
</comment>
<comment type="subcellular location">
    <subcellularLocation>
        <location evidence="1">Cytoplasm</location>
    </subcellularLocation>
</comment>
<comment type="similarity">
    <text evidence="1">Belongs to the XseB family.</text>
</comment>
<feature type="chain" id="PRO_1000205220" description="Exodeoxyribonuclease 7 small subunit">
    <location>
        <begin position="1"/>
        <end position="87"/>
    </location>
</feature>
<keyword id="KW-0963">Cytoplasm</keyword>
<keyword id="KW-0269">Exonuclease</keyword>
<keyword id="KW-0378">Hydrolase</keyword>
<keyword id="KW-0540">Nuclease</keyword>
<reference key="1">
    <citation type="journal article" date="2009" name="Genome Res.">
        <title>Whole genome sequence of Desulfovibrio magneticus strain RS-1 revealed common gene clusters in magnetotactic bacteria.</title>
        <authorList>
            <person name="Nakazawa H."/>
            <person name="Arakaki A."/>
            <person name="Narita-Yamada S."/>
            <person name="Yashiro I."/>
            <person name="Jinno K."/>
            <person name="Aoki N."/>
            <person name="Tsuruyama A."/>
            <person name="Okamura Y."/>
            <person name="Tanikawa S."/>
            <person name="Fujita N."/>
            <person name="Takeyama H."/>
            <person name="Matsunaga T."/>
        </authorList>
    </citation>
    <scope>NUCLEOTIDE SEQUENCE [LARGE SCALE GENOMIC DNA]</scope>
    <source>
        <strain>ATCC 700980 / DSM 13731 / RS-1</strain>
    </source>
</reference>
<protein>
    <recommendedName>
        <fullName evidence="1">Exodeoxyribonuclease 7 small subunit</fullName>
        <ecNumber evidence="1">3.1.11.6</ecNumber>
    </recommendedName>
    <alternativeName>
        <fullName evidence="1">Exodeoxyribonuclease VII small subunit</fullName>
        <shortName evidence="1">Exonuclease VII small subunit</shortName>
    </alternativeName>
</protein>
<dbReference type="EC" id="3.1.11.6" evidence="1"/>
<dbReference type="EMBL" id="AP010904">
    <property type="protein sequence ID" value="BAH75925.1"/>
    <property type="molecule type" value="Genomic_DNA"/>
</dbReference>
<dbReference type="RefSeq" id="WP_015861104.1">
    <property type="nucleotide sequence ID" value="NC_012796.1"/>
</dbReference>
<dbReference type="SMR" id="C4XTC8"/>
<dbReference type="STRING" id="573370.DMR_24340"/>
<dbReference type="KEGG" id="dma:DMR_24340"/>
<dbReference type="eggNOG" id="COG1722">
    <property type="taxonomic scope" value="Bacteria"/>
</dbReference>
<dbReference type="HOGENOM" id="CLU_145918_2_2_7"/>
<dbReference type="OrthoDB" id="5340035at2"/>
<dbReference type="Proteomes" id="UP000009071">
    <property type="component" value="Chromosome"/>
</dbReference>
<dbReference type="GO" id="GO:0005829">
    <property type="term" value="C:cytosol"/>
    <property type="evidence" value="ECO:0007669"/>
    <property type="project" value="TreeGrafter"/>
</dbReference>
<dbReference type="GO" id="GO:0009318">
    <property type="term" value="C:exodeoxyribonuclease VII complex"/>
    <property type="evidence" value="ECO:0007669"/>
    <property type="project" value="InterPro"/>
</dbReference>
<dbReference type="GO" id="GO:0008855">
    <property type="term" value="F:exodeoxyribonuclease VII activity"/>
    <property type="evidence" value="ECO:0007669"/>
    <property type="project" value="UniProtKB-UniRule"/>
</dbReference>
<dbReference type="GO" id="GO:0006308">
    <property type="term" value="P:DNA catabolic process"/>
    <property type="evidence" value="ECO:0007669"/>
    <property type="project" value="UniProtKB-UniRule"/>
</dbReference>
<dbReference type="Gene3D" id="1.10.287.1040">
    <property type="entry name" value="Exonuclease VII, small subunit"/>
    <property type="match status" value="1"/>
</dbReference>
<dbReference type="HAMAP" id="MF_00337">
    <property type="entry name" value="Exonuc_7_S"/>
    <property type="match status" value="1"/>
</dbReference>
<dbReference type="InterPro" id="IPR003761">
    <property type="entry name" value="Exonuc_VII_S"/>
</dbReference>
<dbReference type="InterPro" id="IPR037004">
    <property type="entry name" value="Exonuc_VII_ssu_sf"/>
</dbReference>
<dbReference type="NCBIfam" id="TIGR01280">
    <property type="entry name" value="xseB"/>
    <property type="match status" value="1"/>
</dbReference>
<dbReference type="PANTHER" id="PTHR34137">
    <property type="entry name" value="EXODEOXYRIBONUCLEASE 7 SMALL SUBUNIT"/>
    <property type="match status" value="1"/>
</dbReference>
<dbReference type="PANTHER" id="PTHR34137:SF1">
    <property type="entry name" value="EXODEOXYRIBONUCLEASE 7 SMALL SUBUNIT"/>
    <property type="match status" value="1"/>
</dbReference>
<dbReference type="Pfam" id="PF02609">
    <property type="entry name" value="Exonuc_VII_S"/>
    <property type="match status" value="1"/>
</dbReference>
<dbReference type="SUPFAM" id="SSF116842">
    <property type="entry name" value="XseB-like"/>
    <property type="match status" value="1"/>
</dbReference>
<evidence type="ECO:0000255" key="1">
    <source>
        <dbReference type="HAMAP-Rule" id="MF_00337"/>
    </source>
</evidence>